<protein>
    <recommendedName>
        <fullName>Neuronal acetylcholine receptor subunit beta-2</fullName>
    </recommendedName>
    <alternativeName>
        <fullName>Neuronal acetylcholine receptor non-alpha-1 chain</fullName>
        <shortName>N-alpha 1</shortName>
    </alternativeName>
</protein>
<proteinExistence type="evidence at protein level"/>
<comment type="function">
    <text evidence="3">Component of neuronal acetylcholine receptors (nAChRs) that function as pentameric, ligand-gated cation channels with high calcium permeability among other activities. nAChRs are excitatory neurotrasnmitter receptors formed by a collection of nAChR subunits known to mediate synaptic transmission in the nervous system and the neuromuscular junction. Each nAchR subunit confers differential attributes to channel properties, including activation, deactivation and desensitization kinetics, pH sensitivity, cation permeability, and binding to allosteric modulators. CHRNB2 forms heteropentameric neuronal acetylcholine receptors with CHRNA2, CHRNA3, CHRNA4 and CHRNA6, as well as CHRNA5 and CHRNB3 as accesory subunits.</text>
</comment>
<comment type="catalytic activity">
    <reaction evidence="3">
        <text>Ca(2+)(in) = Ca(2+)(out)</text>
        <dbReference type="Rhea" id="RHEA:29671"/>
        <dbReference type="ChEBI" id="CHEBI:29108"/>
    </reaction>
</comment>
<comment type="catalytic activity">
    <reaction evidence="1">
        <text>K(+)(in) = K(+)(out)</text>
        <dbReference type="Rhea" id="RHEA:29463"/>
        <dbReference type="ChEBI" id="CHEBI:29103"/>
    </reaction>
</comment>
<comment type="catalytic activity">
    <reaction evidence="3">
        <text>Na(+)(in) = Na(+)(out)</text>
        <dbReference type="Rhea" id="RHEA:34963"/>
        <dbReference type="ChEBI" id="CHEBI:29101"/>
    </reaction>
</comment>
<comment type="activity regulation">
    <text evidence="3">Activated by a myriad of ligands such as acetylcholine, cytisine, nicotine, choline and epibatidine. nAChR activity is inhibited by the antagonist alpha-conotoxins BuIA, PnIA, PnIC, GID and MII, small disulfide-constrained peptides from cone snails.</text>
</comment>
<comment type="subunit">
    <text evidence="2 3 5">Neuronal AChR is a heteropentamer composed of two different types of subunits: alpha and beta (PubMed:2005979). CHRNB2/Beta-2 subunit can be combined to CHRNA2/alpha-2, CHRNA3/alpha-3 or CHRNA4/alpha-4, CHRNA5/alpha-5, CHRNA6/alpha-6 and CHRNB3/beta-3 to give rise to functional receptors (By similarity).</text>
</comment>
<comment type="interaction">
    <interactant intactId="EBI-10686072">
        <id>P09484</id>
    </interactant>
    <interactant intactId="EBI-10686088">
        <id>P09482</id>
        <label>CHRNA4</label>
    </interactant>
    <organismsDiffer>false</organismsDiffer>
    <experiments>7</experiments>
</comment>
<comment type="interaction">
    <interactant intactId="EBI-10686072">
        <id>P09484</id>
    </interactant>
    <interactant intactId="EBI-10686157">
        <id>P26152</id>
        <label>CHRNA5</label>
    </interactant>
    <organismsDiffer>false</organismsDiffer>
    <experiments>8</experiments>
</comment>
<comment type="subcellular location">
    <subcellularLocation>
        <location evidence="2">Synaptic cell membrane</location>
        <topology evidence="4">Multi-pass membrane protein</topology>
    </subcellularLocation>
    <subcellularLocation>
        <location evidence="3">Cell membrane</location>
        <topology evidence="4">Multi-pass membrane protein</topology>
    </subcellularLocation>
</comment>
<comment type="similarity">
    <text evidence="6">Belongs to the ligand-gated ion channel (TC 1.A.9) family. Acetylcholine receptor (TC 1.A.9.1) subfamily. Beta-2/CHRNB2 sub-subfamily.</text>
</comment>
<accession>P09484</accession>
<dbReference type="EMBL" id="X07353">
    <property type="protein sequence ID" value="CAA30286.1"/>
    <property type="molecule type" value="Genomic_DNA"/>
</dbReference>
<dbReference type="EMBL" id="X07400">
    <property type="protein sequence ID" value="CAA30286.1"/>
    <property type="status" value="JOINED"/>
    <property type="molecule type" value="Genomic_DNA"/>
</dbReference>
<dbReference type="EMBL" id="X07354">
    <property type="protein sequence ID" value="CAA30286.1"/>
    <property type="status" value="JOINED"/>
    <property type="molecule type" value="Genomic_DNA"/>
</dbReference>
<dbReference type="EMBL" id="X07355">
    <property type="protein sequence ID" value="CAA30286.1"/>
    <property type="status" value="JOINED"/>
    <property type="molecule type" value="Genomic_DNA"/>
</dbReference>
<dbReference type="EMBL" id="X07356">
    <property type="protein sequence ID" value="CAA30286.1"/>
    <property type="status" value="JOINED"/>
    <property type="molecule type" value="Genomic_DNA"/>
</dbReference>
<dbReference type="EMBL" id="X07357">
    <property type="protein sequence ID" value="CAA30286.1"/>
    <property type="status" value="JOINED"/>
    <property type="molecule type" value="Genomic_DNA"/>
</dbReference>
<dbReference type="EMBL" id="AJ250362">
    <property type="protein sequence ID" value="CAB59627.1"/>
    <property type="molecule type" value="mRNA"/>
</dbReference>
<dbReference type="EMBL" id="X53092">
    <property type="protein sequence ID" value="CAA37258.1"/>
    <property type="molecule type" value="mRNA"/>
</dbReference>
<dbReference type="PIR" id="S00380">
    <property type="entry name" value="ACCHNN"/>
</dbReference>
<dbReference type="RefSeq" id="NP_990144.1">
    <property type="nucleotide sequence ID" value="NM_204813.2"/>
</dbReference>
<dbReference type="RefSeq" id="XP_046788510.1">
    <property type="nucleotide sequence ID" value="XM_046932554.1"/>
</dbReference>
<dbReference type="SMR" id="P09484"/>
<dbReference type="ComplexPortal" id="CPX-172">
    <property type="entry name" value="Neuronal nicotinic acetylcholine receptor complex, 3xalpha4-2xbeta2"/>
</dbReference>
<dbReference type="ComplexPortal" id="CPX-173">
    <property type="entry name" value="Neuronal nicotinic acetylcholine receptor complex, 2xalpha4-3xbeta2"/>
</dbReference>
<dbReference type="ComplexPortal" id="CPX-179">
    <property type="entry name" value="Neuronal nicotinic acetylcholine receptor complex, alpha2-beta2"/>
</dbReference>
<dbReference type="ComplexPortal" id="CPX-192">
    <property type="entry name" value="Neuronal nicotinic acetylcholine receptor complex, alpha3-alpha5-beta2"/>
</dbReference>
<dbReference type="ComplexPortal" id="CPX-193">
    <property type="entry name" value="Neuronal nicotinic acetylcholine receptor complex, alpha3-beta2"/>
</dbReference>
<dbReference type="ComplexPortal" id="CPX-201">
    <property type="entry name" value="Neuronal nicotinic acetylcholine receptor complex, alpha3-alpha6-beta2-beta3"/>
</dbReference>
<dbReference type="ComplexPortal" id="CPX-217">
    <property type="entry name" value="Neuronal nicotinic acetylcholine receptor complex, alpha4-alpha5-beta2"/>
</dbReference>
<dbReference type="ComplexPortal" id="CPX-239">
    <property type="entry name" value="Neuronal nicotinic acetylcholine receptor complex, alpha7-beta2"/>
</dbReference>
<dbReference type="FunCoup" id="P09484">
    <property type="interactions" value="119"/>
</dbReference>
<dbReference type="IntAct" id="P09484">
    <property type="interactions" value="5"/>
</dbReference>
<dbReference type="STRING" id="9031.ENSGALP00000069860"/>
<dbReference type="GlyCosmos" id="P09484">
    <property type="glycosylation" value="2 sites, No reported glycans"/>
</dbReference>
<dbReference type="GlyGen" id="P09484">
    <property type="glycosylation" value="2 sites"/>
</dbReference>
<dbReference type="PaxDb" id="9031-ENSGALP00000004261"/>
<dbReference type="Ensembl" id="ENSGALT00010067657.1">
    <property type="protein sequence ID" value="ENSGALP00010041400.1"/>
    <property type="gene ID" value="ENSGALG00010027910.1"/>
</dbReference>
<dbReference type="GeneID" id="395605"/>
<dbReference type="KEGG" id="gga:395605"/>
<dbReference type="CTD" id="1141"/>
<dbReference type="VEuPathDB" id="HostDB:geneid_395605"/>
<dbReference type="eggNOG" id="KOG3645">
    <property type="taxonomic scope" value="Eukaryota"/>
</dbReference>
<dbReference type="GeneTree" id="ENSGT00940000158417"/>
<dbReference type="InParanoid" id="P09484"/>
<dbReference type="OMA" id="MAWRSGP"/>
<dbReference type="OrthoDB" id="5975154at2759"/>
<dbReference type="PhylomeDB" id="P09484"/>
<dbReference type="PRO" id="PR:P09484"/>
<dbReference type="Proteomes" id="UP000000539">
    <property type="component" value="Chromosome 25"/>
</dbReference>
<dbReference type="GO" id="GO:0005892">
    <property type="term" value="C:acetylcholine-gated channel complex"/>
    <property type="evidence" value="ECO:0000250"/>
    <property type="project" value="UniProtKB"/>
</dbReference>
<dbReference type="GO" id="GO:0030424">
    <property type="term" value="C:axon"/>
    <property type="evidence" value="ECO:0000314"/>
    <property type="project" value="AgBase"/>
</dbReference>
<dbReference type="GO" id="GO:0034703">
    <property type="term" value="C:cation channel complex"/>
    <property type="evidence" value="ECO:0007669"/>
    <property type="project" value="Ensembl"/>
</dbReference>
<dbReference type="GO" id="GO:0005737">
    <property type="term" value="C:cytoplasm"/>
    <property type="evidence" value="ECO:0000314"/>
    <property type="project" value="AgBase"/>
</dbReference>
<dbReference type="GO" id="GO:0030425">
    <property type="term" value="C:dendrite"/>
    <property type="evidence" value="ECO:0000314"/>
    <property type="project" value="AgBase"/>
</dbReference>
<dbReference type="GO" id="GO:0043005">
    <property type="term" value="C:neuron projection"/>
    <property type="evidence" value="ECO:0000318"/>
    <property type="project" value="GO_Central"/>
</dbReference>
<dbReference type="GO" id="GO:0098878">
    <property type="term" value="C:neurotransmitter receptor complex"/>
    <property type="evidence" value="ECO:0007669"/>
    <property type="project" value="Ensembl"/>
</dbReference>
<dbReference type="GO" id="GO:0043204">
    <property type="term" value="C:perikaryon"/>
    <property type="evidence" value="ECO:0000314"/>
    <property type="project" value="AgBase"/>
</dbReference>
<dbReference type="GO" id="GO:0005886">
    <property type="term" value="C:plasma membrane"/>
    <property type="evidence" value="ECO:0000318"/>
    <property type="project" value="GO_Central"/>
</dbReference>
<dbReference type="GO" id="GO:0045211">
    <property type="term" value="C:postsynaptic membrane"/>
    <property type="evidence" value="ECO:0007669"/>
    <property type="project" value="UniProtKB-KW"/>
</dbReference>
<dbReference type="GO" id="GO:0045202">
    <property type="term" value="C:synapse"/>
    <property type="evidence" value="ECO:0000318"/>
    <property type="project" value="GO_Central"/>
</dbReference>
<dbReference type="GO" id="GO:0042166">
    <property type="term" value="F:acetylcholine binding"/>
    <property type="evidence" value="ECO:0007669"/>
    <property type="project" value="Ensembl"/>
</dbReference>
<dbReference type="GO" id="GO:0015464">
    <property type="term" value="F:acetylcholine receptor activity"/>
    <property type="evidence" value="ECO:0000318"/>
    <property type="project" value="GO_Central"/>
</dbReference>
<dbReference type="GO" id="GO:0022848">
    <property type="term" value="F:acetylcholine-gated monoatomic cation-selective channel activity"/>
    <property type="evidence" value="ECO:0000250"/>
    <property type="project" value="UniProtKB"/>
</dbReference>
<dbReference type="GO" id="GO:0095500">
    <property type="term" value="P:acetylcholine receptor signaling pathway"/>
    <property type="evidence" value="ECO:0000250"/>
    <property type="project" value="UniProtKB"/>
</dbReference>
<dbReference type="GO" id="GO:0035095">
    <property type="term" value="P:behavioral response to nicotine"/>
    <property type="evidence" value="ECO:0007669"/>
    <property type="project" value="Ensembl"/>
</dbReference>
<dbReference type="GO" id="GO:0007268">
    <property type="term" value="P:chemical synaptic transmission"/>
    <property type="evidence" value="ECO:0000318"/>
    <property type="project" value="GO_Central"/>
</dbReference>
<dbReference type="GO" id="GO:0051899">
    <property type="term" value="P:membrane depolarization"/>
    <property type="evidence" value="ECO:0000318"/>
    <property type="project" value="GO_Central"/>
</dbReference>
<dbReference type="GO" id="GO:0007613">
    <property type="term" value="P:memory"/>
    <property type="evidence" value="ECO:0007669"/>
    <property type="project" value="Ensembl"/>
</dbReference>
<dbReference type="GO" id="GO:0034220">
    <property type="term" value="P:monoatomic ion transmembrane transport"/>
    <property type="evidence" value="ECO:0000318"/>
    <property type="project" value="GO_Central"/>
</dbReference>
<dbReference type="GO" id="GO:0001666">
    <property type="term" value="P:response to hypoxia"/>
    <property type="evidence" value="ECO:0007669"/>
    <property type="project" value="Ensembl"/>
</dbReference>
<dbReference type="GO" id="GO:0007271">
    <property type="term" value="P:synaptic transmission, cholinergic"/>
    <property type="evidence" value="ECO:0000250"/>
    <property type="project" value="UniProtKB"/>
</dbReference>
<dbReference type="GO" id="GO:0008542">
    <property type="term" value="P:visual learning"/>
    <property type="evidence" value="ECO:0007669"/>
    <property type="project" value="Ensembl"/>
</dbReference>
<dbReference type="CDD" id="cd19025">
    <property type="entry name" value="LGIC_ECD_nAChR_B2"/>
    <property type="match status" value="1"/>
</dbReference>
<dbReference type="CDD" id="cd19064">
    <property type="entry name" value="LGIC_TM_nAChR"/>
    <property type="match status" value="1"/>
</dbReference>
<dbReference type="FunFam" id="1.20.58.390:FF:000028">
    <property type="entry name" value="Cholinergic receptor nicotinic beta 2 subunit"/>
    <property type="match status" value="1"/>
</dbReference>
<dbReference type="FunFam" id="2.70.170.10:FF:000006">
    <property type="entry name" value="Cholinergic receptor nicotinic beta 2 subunit"/>
    <property type="match status" value="1"/>
</dbReference>
<dbReference type="FunFam" id="1.20.58.390:FF:000008">
    <property type="entry name" value="Cholinergic receptor nicotinic beta 4 subunit"/>
    <property type="match status" value="1"/>
</dbReference>
<dbReference type="Gene3D" id="2.70.170.10">
    <property type="entry name" value="Neurotransmitter-gated ion-channel ligand-binding domain"/>
    <property type="match status" value="1"/>
</dbReference>
<dbReference type="Gene3D" id="1.20.58.390">
    <property type="entry name" value="Neurotransmitter-gated ion-channel transmembrane domain"/>
    <property type="match status" value="2"/>
</dbReference>
<dbReference type="InterPro" id="IPR006202">
    <property type="entry name" value="Neur_chan_lig-bd"/>
</dbReference>
<dbReference type="InterPro" id="IPR036734">
    <property type="entry name" value="Neur_chan_lig-bd_sf"/>
</dbReference>
<dbReference type="InterPro" id="IPR006201">
    <property type="entry name" value="Neur_channel"/>
</dbReference>
<dbReference type="InterPro" id="IPR036719">
    <property type="entry name" value="Neuro-gated_channel_TM_sf"/>
</dbReference>
<dbReference type="InterPro" id="IPR038050">
    <property type="entry name" value="Neuro_actylchol_rec"/>
</dbReference>
<dbReference type="InterPro" id="IPR006029">
    <property type="entry name" value="Neurotrans-gated_channel_TM"/>
</dbReference>
<dbReference type="InterPro" id="IPR018000">
    <property type="entry name" value="Neurotransmitter_ion_chnl_CS"/>
</dbReference>
<dbReference type="InterPro" id="IPR002394">
    <property type="entry name" value="Nicotinic_acetylcholine_rcpt"/>
</dbReference>
<dbReference type="NCBIfam" id="TIGR00860">
    <property type="entry name" value="LIC"/>
    <property type="match status" value="1"/>
</dbReference>
<dbReference type="PANTHER" id="PTHR18945">
    <property type="entry name" value="NEUROTRANSMITTER GATED ION CHANNEL"/>
    <property type="match status" value="1"/>
</dbReference>
<dbReference type="Pfam" id="PF02931">
    <property type="entry name" value="Neur_chan_LBD"/>
    <property type="match status" value="1"/>
</dbReference>
<dbReference type="Pfam" id="PF02932">
    <property type="entry name" value="Neur_chan_memb"/>
    <property type="match status" value="1"/>
</dbReference>
<dbReference type="PRINTS" id="PR00254">
    <property type="entry name" value="NICOTINICR"/>
</dbReference>
<dbReference type="PRINTS" id="PR00252">
    <property type="entry name" value="NRIONCHANNEL"/>
</dbReference>
<dbReference type="SUPFAM" id="SSF90112">
    <property type="entry name" value="Neurotransmitter-gated ion-channel transmembrane pore"/>
    <property type="match status" value="1"/>
</dbReference>
<dbReference type="SUPFAM" id="SSF63712">
    <property type="entry name" value="Nicotinic receptor ligand binding domain-like"/>
    <property type="match status" value="1"/>
</dbReference>
<dbReference type="PROSITE" id="PS00236">
    <property type="entry name" value="NEUROTR_ION_CHANNEL"/>
    <property type="match status" value="1"/>
</dbReference>
<gene>
    <name type="primary">CHRNB2</name>
</gene>
<keyword id="KW-1003">Cell membrane</keyword>
<keyword id="KW-1015">Disulfide bond</keyword>
<keyword id="KW-0325">Glycoprotein</keyword>
<keyword id="KW-0407">Ion channel</keyword>
<keyword id="KW-0406">Ion transport</keyword>
<keyword id="KW-1071">Ligand-gated ion channel</keyword>
<keyword id="KW-0472">Membrane</keyword>
<keyword id="KW-0675">Receptor</keyword>
<keyword id="KW-1185">Reference proteome</keyword>
<keyword id="KW-0732">Signal</keyword>
<keyword id="KW-0770">Synapse</keyword>
<keyword id="KW-0812">Transmembrane</keyword>
<keyword id="KW-1133">Transmembrane helix</keyword>
<keyword id="KW-0813">Transport</keyword>
<reference key="1">
    <citation type="journal article" date="1988" name="EMBO J.">
        <title>Genes expressed in the brain define three distinct neuronal nicotinic acetylcholine receptors.</title>
        <authorList>
            <person name="Nef P."/>
            <person name="Oneyser C."/>
            <person name="Alliod C."/>
            <person name="Couturier S."/>
            <person name="Ballivet M."/>
        </authorList>
    </citation>
    <scope>NUCLEOTIDE SEQUENCE [GENOMIC DNA / MRNA]</scope>
    <source>
        <strain>White leghorn</strain>
        <tissue>Brain</tissue>
    </source>
</reference>
<reference key="2">
    <citation type="journal article" date="1988" name="Neuron">
        <title>cDNA clones coding for the structural subunit of a chicken brain nicotinic acetylcholine receptor.</title>
        <authorList>
            <person name="Schoepfer R."/>
            <person name="Whiting P."/>
            <person name="Esch F."/>
            <person name="Blacher R."/>
            <person name="Shimasaki S."/>
            <person name="Lindstrom J."/>
        </authorList>
    </citation>
    <scope>NUCLEOTIDE SEQUENCE [MRNA]</scope>
    <source>
        <tissue>Brain</tissue>
    </source>
</reference>
<reference key="3">
    <citation type="journal article" date="1991" name="Nature">
        <title>Pentameric structure and subunit stoichiometry of a neuronal nicotinic acetylcholine receptor.</title>
        <authorList>
            <person name="Cooper E."/>
            <person name="Couturier S."/>
            <person name="Ballivet M."/>
        </authorList>
    </citation>
    <scope>MUTAGENESIS OF LYS-278</scope>
    <scope>SUBUNIT</scope>
</reference>
<sequence>MALLRVLCLLAALRRSLCTDTEERLVEYLLDPTRYNKLIRPATNGSQLVTVQLMVSLAQLISVHEREQIMTTNVWLTQEWEDYRLTWKPEDFDNMKKVRLPSKHIWLPDVVLYNNADGMYEVSFYSNAVISYDGSIFWLPPAIYKSACKIEVKHFPFDQQNCTMKFRSWTYDRTEIDLVLKSEVASLDDFTPSGEWDIVALPGRRNENPDDSTYVDITYDFIIRRKPLFYTINLIIPCILITSLAILVFYLPSDCGEKMTLCISVLLALTVFLLLISKIVPPTSLDVPLVGKYLMFTMVLVTFSIVTSVCVLNVHHRSPTTHTMPPWVRTLFLRKLPALLFMKQPQQNCARQRLRQRRQTQERAAAATLFLRAGARACACYANPGAAKAEGLNGYRERQGQGPDPPAPCGCGLEEAVEGVRFIADHMRSEDDDQSVSEDWKYVAMVIDRLFLWIFVFVCVFGTVGMFLQPLFQNYATNSLLQLGQGTPTSK</sequence>
<organism>
    <name type="scientific">Gallus gallus</name>
    <name type="common">Chicken</name>
    <dbReference type="NCBI Taxonomy" id="9031"/>
    <lineage>
        <taxon>Eukaryota</taxon>
        <taxon>Metazoa</taxon>
        <taxon>Chordata</taxon>
        <taxon>Craniata</taxon>
        <taxon>Vertebrata</taxon>
        <taxon>Euteleostomi</taxon>
        <taxon>Archelosauria</taxon>
        <taxon>Archosauria</taxon>
        <taxon>Dinosauria</taxon>
        <taxon>Saurischia</taxon>
        <taxon>Theropoda</taxon>
        <taxon>Coelurosauria</taxon>
        <taxon>Aves</taxon>
        <taxon>Neognathae</taxon>
        <taxon>Galloanserae</taxon>
        <taxon>Galliformes</taxon>
        <taxon>Phasianidae</taxon>
        <taxon>Phasianinae</taxon>
        <taxon>Gallus</taxon>
    </lineage>
</organism>
<feature type="signal peptide">
    <location>
        <begin position="1"/>
        <end position="18"/>
    </location>
</feature>
<feature type="chain" id="PRO_0000000382" description="Neuronal acetylcholine receptor subunit beta-2">
    <location>
        <begin position="19"/>
        <end position="491"/>
    </location>
</feature>
<feature type="topological domain" description="Extracellular" evidence="4">
    <location>
        <begin position="19"/>
        <end position="226"/>
    </location>
</feature>
<feature type="transmembrane region" description="Helical" evidence="4">
    <location>
        <begin position="227"/>
        <end position="251"/>
    </location>
</feature>
<feature type="topological domain" description="Cytoplasmic" evidence="4">
    <location>
        <begin position="252"/>
        <end position="258"/>
    </location>
</feature>
<feature type="transmembrane region" description="Helical" evidence="4">
    <location>
        <begin position="259"/>
        <end position="277"/>
    </location>
</feature>
<feature type="topological domain" description="Extracellular" evidence="4">
    <location>
        <begin position="278"/>
        <end position="292"/>
    </location>
</feature>
<feature type="transmembrane region" description="Helical" evidence="4">
    <location>
        <begin position="293"/>
        <end position="314"/>
    </location>
</feature>
<feature type="topological domain" description="Cytoplasmic" evidence="4">
    <location>
        <begin position="315"/>
        <end position="449"/>
    </location>
</feature>
<feature type="transmembrane region" description="Helical" evidence="4">
    <location>
        <begin position="450"/>
        <end position="468"/>
    </location>
</feature>
<feature type="site" description="Key residue that may interfere with effective access of the conotoxin BuIA to the channel binding site" evidence="2">
    <location>
        <position position="77"/>
    </location>
</feature>
<feature type="site" description="Key residue for a rapid dissociation (K(off)) from the conotoxin BuIA" evidence="2">
    <location>
        <position position="129"/>
    </location>
</feature>
<feature type="site" description="Key residue for a rapid dissociation (K(off)) from the conotoxin BuIA" evidence="2">
    <location>
        <position position="137"/>
    </location>
</feature>
<feature type="glycosylation site" description="N-linked (GlcNAc...) asparagine" evidence="4">
    <location>
        <position position="44"/>
    </location>
</feature>
<feature type="glycosylation site" description="N-linked (GlcNAc...) asparagine" evidence="4">
    <location>
        <position position="161"/>
    </location>
</feature>
<feature type="disulfide bond" evidence="3">
    <location>
        <begin position="148"/>
        <end position="162"/>
    </location>
</feature>
<feature type="mutagenesis site" description="Increases channel conductance by almost 100%." evidence="5">
    <original>K</original>
    <variation>E</variation>
    <location>
        <position position="278"/>
    </location>
</feature>
<name>ACHB2_CHICK</name>
<evidence type="ECO:0000250" key="1">
    <source>
        <dbReference type="UniProtKB" id="P04758"/>
    </source>
</evidence>
<evidence type="ECO:0000250" key="2">
    <source>
        <dbReference type="UniProtKB" id="P12390"/>
    </source>
</evidence>
<evidence type="ECO:0000250" key="3">
    <source>
        <dbReference type="UniProtKB" id="P17787"/>
    </source>
</evidence>
<evidence type="ECO:0000255" key="4"/>
<evidence type="ECO:0000269" key="5">
    <source>
    </source>
</evidence>
<evidence type="ECO:0000305" key="6"/>